<dbReference type="EMBL" id="CP000560">
    <property type="protein sequence ID" value="ABS72520.1"/>
    <property type="molecule type" value="Genomic_DNA"/>
</dbReference>
<dbReference type="RefSeq" id="WP_004264606.1">
    <property type="nucleotide sequence ID" value="NC_009725.2"/>
</dbReference>
<dbReference type="SMR" id="A7Z0J4"/>
<dbReference type="GeneID" id="93079220"/>
<dbReference type="KEGG" id="bay:RBAM_000820"/>
<dbReference type="HOGENOM" id="CLU_054493_1_0_9"/>
<dbReference type="Proteomes" id="UP000001120">
    <property type="component" value="Chromosome"/>
</dbReference>
<dbReference type="GO" id="GO:0005737">
    <property type="term" value="C:cytoplasm"/>
    <property type="evidence" value="ECO:0007669"/>
    <property type="project" value="UniProtKB-SubCell"/>
</dbReference>
<dbReference type="GO" id="GO:0044183">
    <property type="term" value="F:protein folding chaperone"/>
    <property type="evidence" value="ECO:0007669"/>
    <property type="project" value="TreeGrafter"/>
</dbReference>
<dbReference type="GO" id="GO:0051082">
    <property type="term" value="F:unfolded protein binding"/>
    <property type="evidence" value="ECO:0007669"/>
    <property type="project" value="UniProtKB-UniRule"/>
</dbReference>
<dbReference type="GO" id="GO:0042026">
    <property type="term" value="P:protein refolding"/>
    <property type="evidence" value="ECO:0007669"/>
    <property type="project" value="TreeGrafter"/>
</dbReference>
<dbReference type="CDD" id="cd00498">
    <property type="entry name" value="Hsp33"/>
    <property type="match status" value="1"/>
</dbReference>
<dbReference type="Gene3D" id="3.55.30.10">
    <property type="entry name" value="Hsp33 domain"/>
    <property type="match status" value="1"/>
</dbReference>
<dbReference type="Gene3D" id="3.90.1280.10">
    <property type="entry name" value="HSP33 redox switch-like"/>
    <property type="match status" value="1"/>
</dbReference>
<dbReference type="HAMAP" id="MF_00117">
    <property type="entry name" value="HslO"/>
    <property type="match status" value="1"/>
</dbReference>
<dbReference type="InterPro" id="IPR000397">
    <property type="entry name" value="Heat_shock_Hsp33"/>
</dbReference>
<dbReference type="InterPro" id="IPR016154">
    <property type="entry name" value="Heat_shock_Hsp33_C"/>
</dbReference>
<dbReference type="InterPro" id="IPR016153">
    <property type="entry name" value="Heat_shock_Hsp33_N"/>
</dbReference>
<dbReference type="NCBIfam" id="NF001033">
    <property type="entry name" value="PRK00114.1"/>
    <property type="match status" value="1"/>
</dbReference>
<dbReference type="PANTHER" id="PTHR30111">
    <property type="entry name" value="33 KDA CHAPERONIN"/>
    <property type="match status" value="1"/>
</dbReference>
<dbReference type="PANTHER" id="PTHR30111:SF1">
    <property type="entry name" value="33 KDA CHAPERONIN"/>
    <property type="match status" value="1"/>
</dbReference>
<dbReference type="Pfam" id="PF01430">
    <property type="entry name" value="HSP33"/>
    <property type="match status" value="1"/>
</dbReference>
<dbReference type="PIRSF" id="PIRSF005261">
    <property type="entry name" value="Heat_shock_Hsp33"/>
    <property type="match status" value="1"/>
</dbReference>
<dbReference type="SUPFAM" id="SSF64397">
    <property type="entry name" value="Hsp33 domain"/>
    <property type="match status" value="1"/>
</dbReference>
<dbReference type="SUPFAM" id="SSF118352">
    <property type="entry name" value="HSP33 redox switch-like"/>
    <property type="match status" value="1"/>
</dbReference>
<accession>A7Z0J4</accession>
<sequence length="291" mass="31856">MDYLIKAIAYDGKVRAYAARTTDMVNEAQRRHDTWPTASAAIGRTMTASLMLGAMLKGEDKLTVKIEGGGPIGAIVADANAKGEVRAYVSNPHVHFDLNEQGKLDVRRAVGTDGTLSVVKDLGLRDYFTGQVEIVSGELGDDFTYYLVSSEQVPSSVGVGVLVNPDNTILAAGGFIIQLLPGTDEETISTIEKQLSQIEPISKLIQKGLTPEEILEEVLGQKPDVLETMPVKFHCSCSKDRFETAILGLGKKEIQDMIEEDGKAEAVCHFCNEKYLFTKEELEELRDETTR</sequence>
<gene>
    <name evidence="1" type="primary">hslO</name>
    <name type="ordered locus">RBAM_000820</name>
</gene>
<proteinExistence type="inferred from homology"/>
<name>HSLO_BACVZ</name>
<evidence type="ECO:0000255" key="1">
    <source>
        <dbReference type="HAMAP-Rule" id="MF_00117"/>
    </source>
</evidence>
<organism>
    <name type="scientific">Bacillus velezensis (strain DSM 23117 / BGSC 10A6 / LMG 26770 / FZB42)</name>
    <name type="common">Bacillus amyloliquefaciens subsp. plantarum</name>
    <dbReference type="NCBI Taxonomy" id="326423"/>
    <lineage>
        <taxon>Bacteria</taxon>
        <taxon>Bacillati</taxon>
        <taxon>Bacillota</taxon>
        <taxon>Bacilli</taxon>
        <taxon>Bacillales</taxon>
        <taxon>Bacillaceae</taxon>
        <taxon>Bacillus</taxon>
        <taxon>Bacillus amyloliquefaciens group</taxon>
    </lineage>
</organism>
<comment type="function">
    <text evidence="1">Redox regulated molecular chaperone. Protects both thermally unfolding and oxidatively damaged proteins from irreversible aggregation. Plays an important role in the bacterial defense system toward oxidative stress.</text>
</comment>
<comment type="subcellular location">
    <subcellularLocation>
        <location evidence="1">Cytoplasm</location>
    </subcellularLocation>
</comment>
<comment type="PTM">
    <text evidence="1">Under oxidizing conditions two disulfide bonds are formed involving the reactive cysteines. Under reducing conditions zinc is bound to the reactive cysteines and the protein is inactive.</text>
</comment>
<comment type="similarity">
    <text evidence="1">Belongs to the HSP33 family.</text>
</comment>
<reference key="1">
    <citation type="journal article" date="2007" name="Nat. Biotechnol.">
        <title>Comparative analysis of the complete genome sequence of the plant growth-promoting bacterium Bacillus amyloliquefaciens FZB42.</title>
        <authorList>
            <person name="Chen X.H."/>
            <person name="Koumoutsi A."/>
            <person name="Scholz R."/>
            <person name="Eisenreich A."/>
            <person name="Schneider K."/>
            <person name="Heinemeyer I."/>
            <person name="Morgenstern B."/>
            <person name="Voss B."/>
            <person name="Hess W.R."/>
            <person name="Reva O."/>
            <person name="Junge H."/>
            <person name="Voigt B."/>
            <person name="Jungblut P.R."/>
            <person name="Vater J."/>
            <person name="Suessmuth R."/>
            <person name="Liesegang H."/>
            <person name="Strittmatter A."/>
            <person name="Gottschalk G."/>
            <person name="Borriss R."/>
        </authorList>
    </citation>
    <scope>NUCLEOTIDE SEQUENCE [LARGE SCALE GENOMIC DNA]</scope>
    <source>
        <strain>DSM 23117 / BGSC 10A6 / LMG 26770 / FZB42</strain>
    </source>
</reference>
<feature type="chain" id="PRO_1000015531" description="33 kDa chaperonin">
    <location>
        <begin position="1"/>
        <end position="291"/>
    </location>
</feature>
<feature type="disulfide bond" description="Redox-active" evidence="1">
    <location>
        <begin position="235"/>
        <end position="237"/>
    </location>
</feature>
<feature type="disulfide bond" description="Redox-active" evidence="1">
    <location>
        <begin position="268"/>
        <end position="271"/>
    </location>
</feature>
<protein>
    <recommendedName>
        <fullName evidence="1">33 kDa chaperonin</fullName>
    </recommendedName>
    <alternativeName>
        <fullName evidence="1">Heat shock protein 33 homolog</fullName>
        <shortName evidence="1">HSP33</shortName>
    </alternativeName>
</protein>
<keyword id="KW-0143">Chaperone</keyword>
<keyword id="KW-0963">Cytoplasm</keyword>
<keyword id="KW-1015">Disulfide bond</keyword>
<keyword id="KW-0676">Redox-active center</keyword>
<keyword id="KW-0862">Zinc</keyword>